<keyword id="KW-1003">Cell membrane</keyword>
<keyword id="KW-1015">Disulfide bond</keyword>
<keyword id="KW-0297">G-protein coupled receptor</keyword>
<keyword id="KW-0325">Glycoprotein</keyword>
<keyword id="KW-0472">Membrane</keyword>
<keyword id="KW-0589">Pheromone response</keyword>
<keyword id="KW-0675">Receptor</keyword>
<keyword id="KW-1185">Reference proteome</keyword>
<keyword id="KW-0807">Transducer</keyword>
<keyword id="KW-0812">Transmembrane</keyword>
<keyword id="KW-1133">Transmembrane helix</keyword>
<organism>
    <name type="scientific">Mus musculus</name>
    <name type="common">Mouse</name>
    <dbReference type="NCBI Taxonomy" id="10090"/>
    <lineage>
        <taxon>Eukaryota</taxon>
        <taxon>Metazoa</taxon>
        <taxon>Chordata</taxon>
        <taxon>Craniata</taxon>
        <taxon>Vertebrata</taxon>
        <taxon>Euteleostomi</taxon>
        <taxon>Mammalia</taxon>
        <taxon>Eutheria</taxon>
        <taxon>Euarchontoglires</taxon>
        <taxon>Glires</taxon>
        <taxon>Rodentia</taxon>
        <taxon>Myomorpha</taxon>
        <taxon>Muroidea</taxon>
        <taxon>Muridae</taxon>
        <taxon>Murinae</taxon>
        <taxon>Mus</taxon>
        <taxon>Mus</taxon>
    </lineage>
</organism>
<evidence type="ECO:0000255" key="1"/>
<evidence type="ECO:0000255" key="2">
    <source>
        <dbReference type="PROSITE-ProRule" id="PRU00521"/>
    </source>
</evidence>
<evidence type="ECO:0000269" key="3">
    <source>
    </source>
</evidence>
<evidence type="ECO:0000305" key="4"/>
<evidence type="ECO:0000312" key="5">
    <source>
        <dbReference type="EMBL" id="AAG42079.1"/>
    </source>
</evidence>
<evidence type="ECO:0000312" key="6">
    <source>
        <dbReference type="EMBL" id="BAB79209.1"/>
    </source>
</evidence>
<evidence type="ECO:0000312" key="7">
    <source>
        <dbReference type="EMBL" id="BAB79210.1"/>
    </source>
</evidence>
<accession>Q8VBS7</accession>
<accession>Q9EQ49</accession>
<feature type="chain" id="PRO_0000239961" description="Vomeronasal type-1 receptor 42">
    <location>
        <begin position="1"/>
        <end position="329"/>
    </location>
</feature>
<feature type="topological domain" description="Extracellular" evidence="1">
    <location>
        <begin position="1"/>
        <end position="32"/>
    </location>
</feature>
<feature type="transmembrane region" description="Helical; Name=1" evidence="1">
    <location>
        <begin position="33"/>
        <end position="53"/>
    </location>
</feature>
<feature type="topological domain" description="Cytoplasmic" evidence="1">
    <location>
        <begin position="54"/>
        <end position="65"/>
    </location>
</feature>
<feature type="transmembrane region" description="Helical; Name=2" evidence="1">
    <location>
        <begin position="66"/>
        <end position="86"/>
    </location>
</feature>
<feature type="topological domain" description="Extracellular" evidence="1">
    <location>
        <begin position="87"/>
        <end position="109"/>
    </location>
</feature>
<feature type="transmembrane region" description="Helical; Name=3" evidence="1">
    <location>
        <begin position="110"/>
        <end position="130"/>
    </location>
</feature>
<feature type="topological domain" description="Cytoplasmic" evidence="1">
    <location>
        <begin position="131"/>
        <end position="150"/>
    </location>
</feature>
<feature type="transmembrane region" description="Helical; Name=4" evidence="1">
    <location>
        <begin position="151"/>
        <end position="171"/>
    </location>
</feature>
<feature type="topological domain" description="Extracellular" evidence="1">
    <location>
        <begin position="172"/>
        <end position="209"/>
    </location>
</feature>
<feature type="transmembrane region" description="Helical; Name=5" evidence="1">
    <location>
        <begin position="210"/>
        <end position="230"/>
    </location>
</feature>
<feature type="topological domain" description="Cytoplasmic" evidence="1">
    <location>
        <begin position="231"/>
        <end position="254"/>
    </location>
</feature>
<feature type="transmembrane region" description="Helical; Name=6" evidence="1">
    <location>
        <begin position="255"/>
        <end position="275"/>
    </location>
</feature>
<feature type="topological domain" description="Extracellular" evidence="1">
    <location>
        <begin position="276"/>
        <end position="285"/>
    </location>
</feature>
<feature type="transmembrane region" description="Helical; Name=7" evidence="1">
    <location>
        <begin position="286"/>
        <end position="306"/>
    </location>
</feature>
<feature type="topological domain" description="Cytoplasmic" evidence="1">
    <location>
        <begin position="307"/>
        <end position="329"/>
    </location>
</feature>
<feature type="glycosylation site" description="N-linked (GlcNAc...) asparagine" evidence="1">
    <location>
        <position position="175"/>
    </location>
</feature>
<feature type="disulfide bond" evidence="2">
    <location>
        <begin position="101"/>
        <end position="188"/>
    </location>
</feature>
<reference evidence="7" key="1">
    <citation type="submission" date="2001-06" db="EMBL/GenBank/DDBJ databases">
        <authorList>
            <person name="Sam M."/>
            <person name="Matsunami H."/>
            <person name="Buck L."/>
        </authorList>
    </citation>
    <scope>NUCLEOTIDE SEQUENCE [GENOMIC DNA]</scope>
</reference>
<reference evidence="7" key="2">
    <citation type="submission" date="2001-07" db="EMBL/GenBank/DDBJ databases">
        <authorList>
            <person name="Rodriguez I."/>
            <person name="Mombaerts P."/>
        </authorList>
    </citation>
    <scope>NUCLEOTIDE SEQUENCE [GENOMIC DNA]</scope>
    <source>
        <strain>C57BL/6J</strain>
    </source>
</reference>
<reference evidence="5" key="3">
    <citation type="journal article" date="2000" name="Genome Res.">
        <title>Sequence diversity and genomic organization of vomeronasal receptor genes in the mouse.</title>
        <authorList>
            <person name="Del Punta K."/>
            <person name="Rothman A."/>
            <person name="Rodriguez I."/>
            <person name="Mombaerts P."/>
        </authorList>
    </citation>
    <scope>NUCLEOTIDE SEQUENCE [GENOMIC DNA] OF 17-329</scope>
    <source>
        <strain evidence="5">129/SvJ</strain>
    </source>
</reference>
<reference evidence="4" key="4">
    <citation type="journal article" date="2002" name="Nature">
        <title>Deficient pheromone responses in mice lacking a cluster of vomeronasal receptor genes.</title>
        <authorList>
            <person name="Del Punta K."/>
            <person name="Leinders-Zufall T."/>
            <person name="Rodriguez I."/>
            <person name="Jukam D."/>
            <person name="Wysocki C.J."/>
            <person name="Ogawa S."/>
            <person name="Zufall F."/>
            <person name="Mombaerts P."/>
        </authorList>
    </citation>
    <scope>PUTATIVE FUNCTION</scope>
    <scope>DISRUPTION PHENOTYPE</scope>
</reference>
<dbReference type="EMBL" id="AB062891">
    <property type="protein sequence ID" value="BAB79209.1"/>
    <property type="molecule type" value="Genomic_DNA"/>
</dbReference>
<dbReference type="EMBL" id="AB062892">
    <property type="protein sequence ID" value="BAB79210.1"/>
    <property type="molecule type" value="Genomic_DNA"/>
</dbReference>
<dbReference type="EMBL" id="AY044662">
    <property type="protein sequence ID" value="AAK98772.1"/>
    <property type="molecule type" value="Genomic_DNA"/>
</dbReference>
<dbReference type="EMBL" id="AF291485">
    <property type="protein sequence ID" value="AAG42079.1"/>
    <property type="molecule type" value="Genomic_DNA"/>
</dbReference>
<dbReference type="CCDS" id="CCDS57439.1"/>
<dbReference type="RefSeq" id="NP_444451.2">
    <property type="nucleotide sequence ID" value="NM_053221.2"/>
</dbReference>
<dbReference type="SMR" id="Q8VBS7"/>
<dbReference type="BioGRID" id="227516">
    <property type="interactions" value="1"/>
</dbReference>
<dbReference type="STRING" id="10090.ENSMUSP00000154442"/>
<dbReference type="GlyCosmos" id="Q8VBS7">
    <property type="glycosylation" value="1 site, No reported glycans"/>
</dbReference>
<dbReference type="GlyGen" id="Q8VBS7">
    <property type="glycosylation" value="1 site"/>
</dbReference>
<dbReference type="PaxDb" id="10090-ENSMUSP00000086840"/>
<dbReference type="DNASU" id="113848"/>
<dbReference type="Ensembl" id="ENSMUST00000089419.3">
    <property type="protein sequence ID" value="ENSMUSP00000086840.3"/>
    <property type="gene ID" value="ENSMUSG00000068232.4"/>
</dbReference>
<dbReference type="Ensembl" id="ENSMUST00000226436.2">
    <property type="protein sequence ID" value="ENSMUSP00000154788.2"/>
    <property type="gene ID" value="ENSMUSG00000068232.4"/>
</dbReference>
<dbReference type="Ensembl" id="ENSMUST00000227279.2">
    <property type="protein sequence ID" value="ENSMUSP00000154442.2"/>
    <property type="gene ID" value="ENSMUSG00000068232.4"/>
</dbReference>
<dbReference type="GeneID" id="113848"/>
<dbReference type="KEGG" id="mmu:113848"/>
<dbReference type="UCSC" id="uc009cwm.2">
    <property type="organism name" value="mouse"/>
</dbReference>
<dbReference type="AGR" id="MGI:2148511"/>
<dbReference type="CTD" id="113848"/>
<dbReference type="MGI" id="MGI:2148511">
    <property type="gene designation" value="Vmn1r42"/>
</dbReference>
<dbReference type="VEuPathDB" id="HostDB:ENSMUSG00000068232"/>
<dbReference type="eggNOG" id="ENOG502SNRJ">
    <property type="taxonomic scope" value="Eukaryota"/>
</dbReference>
<dbReference type="GeneTree" id="ENSGT01030000234553"/>
<dbReference type="HOGENOM" id="CLU_058641_0_0_1"/>
<dbReference type="InParanoid" id="Q8VBS7"/>
<dbReference type="OMA" id="IANGYMV"/>
<dbReference type="OrthoDB" id="9620038at2759"/>
<dbReference type="PhylomeDB" id="Q8VBS7"/>
<dbReference type="BioGRID-ORCS" id="113848">
    <property type="hits" value="3 hits in 73 CRISPR screens"/>
</dbReference>
<dbReference type="PRO" id="PR:Q8VBS7"/>
<dbReference type="Proteomes" id="UP000000589">
    <property type="component" value="Chromosome 6"/>
</dbReference>
<dbReference type="RNAct" id="Q8VBS7">
    <property type="molecule type" value="protein"/>
</dbReference>
<dbReference type="Bgee" id="ENSMUSG00000068232">
    <property type="expression patterns" value="Expressed in lumbar subsegment of spinal cord and 3 other cell types or tissues"/>
</dbReference>
<dbReference type="ExpressionAtlas" id="Q8VBS7">
    <property type="expression patterns" value="baseline and differential"/>
</dbReference>
<dbReference type="GO" id="GO:0005886">
    <property type="term" value="C:plasma membrane"/>
    <property type="evidence" value="ECO:0007669"/>
    <property type="project" value="UniProtKB-SubCell"/>
</dbReference>
<dbReference type="GO" id="GO:0016503">
    <property type="term" value="F:pheromone receptor activity"/>
    <property type="evidence" value="ECO:0007669"/>
    <property type="project" value="InterPro"/>
</dbReference>
<dbReference type="GO" id="GO:0019236">
    <property type="term" value="P:response to pheromone"/>
    <property type="evidence" value="ECO:0007669"/>
    <property type="project" value="UniProtKB-KW"/>
</dbReference>
<dbReference type="GO" id="GO:0007606">
    <property type="term" value="P:sensory perception of chemical stimulus"/>
    <property type="evidence" value="ECO:0000304"/>
    <property type="project" value="MGI"/>
</dbReference>
<dbReference type="CDD" id="cd13949">
    <property type="entry name" value="7tm_V1R_pheromone"/>
    <property type="match status" value="1"/>
</dbReference>
<dbReference type="FunFam" id="1.20.1070.10:FF:000051">
    <property type="entry name" value="Vomeronasal type-1 receptor"/>
    <property type="match status" value="1"/>
</dbReference>
<dbReference type="Gene3D" id="1.20.1070.10">
    <property type="entry name" value="Rhodopsin 7-helix transmembrane proteins"/>
    <property type="match status" value="1"/>
</dbReference>
<dbReference type="InterPro" id="IPR017452">
    <property type="entry name" value="GPCR_Rhodpsn_7TM"/>
</dbReference>
<dbReference type="InterPro" id="IPR004072">
    <property type="entry name" value="Vmron_rcpt_1"/>
</dbReference>
<dbReference type="PANTHER" id="PTHR24062">
    <property type="entry name" value="VOMERONASAL TYPE-1 RECEPTOR"/>
    <property type="match status" value="1"/>
</dbReference>
<dbReference type="Pfam" id="PF03402">
    <property type="entry name" value="V1R"/>
    <property type="match status" value="1"/>
</dbReference>
<dbReference type="PRINTS" id="PR01534">
    <property type="entry name" value="VOMERONASL1R"/>
</dbReference>
<dbReference type="SUPFAM" id="SSF81321">
    <property type="entry name" value="Family A G protein-coupled receptor-like"/>
    <property type="match status" value="1"/>
</dbReference>
<dbReference type="PROSITE" id="PS50262">
    <property type="entry name" value="G_PROTEIN_RECEP_F1_2"/>
    <property type="match status" value="1"/>
</dbReference>
<gene>
    <name type="primary">Vmn1r42</name>
    <name evidence="6" type="synonym">V1ra1</name>
    <name type="synonym">V1ra10</name>
    <name evidence="7" type="synonym">V1ra3</name>
    <name type="synonym">V1ra6</name>
</gene>
<sequence length="329" mass="37352">MGDILFSSPQSMFSHTMNKNSILHTHSIIGKTFFSEIGIGISGNSFLLLVHILKFIRGHRPRLTDLPIGLLSLIHLLMLLVAAFIATDIFISRRGWDDIICKFLVYLYRVLRGFSLCTTSMLSILQAIILSPRSSCLAKFKHISPHHISGAILFLSVLYMLIGSQLLVSIIATPNLTMNDFIYVTQSCSILPLSYLMQSIYSTLLAIREFFLISLMVLSNWYMVALLSMHRKQTQHLHGTNLSPKKSPEQSATQTILMLISFFLLMTIYDTIVSCSRTMFLNDPTSYSIELFIMHIYATVSPFVFMSTEKHIVNFLRSLGKRVINFNLH</sequence>
<name>V1R42_MOUSE</name>
<protein>
    <recommendedName>
        <fullName>Vomeronasal type-1 receptor 42</fullName>
    </recommendedName>
    <alternativeName>
        <fullName>Vomeronasal type-1 receptor A1</fullName>
    </alternativeName>
    <alternativeName>
        <fullName>Vomeronasal type-1 receptor A10</fullName>
    </alternativeName>
    <alternativeName>
        <fullName>Vomeronasal type-1 receptor A3</fullName>
    </alternativeName>
    <alternativeName>
        <fullName>Vomeronasal type-1 receptor A6</fullName>
    </alternativeName>
</protein>
<proteinExistence type="inferred from homology"/>
<comment type="function">
    <text evidence="3">Putative pheromone receptor implicated in the regulation of social and reproductive behavior.</text>
</comment>
<comment type="subcellular location">
    <subcellularLocation>
        <location evidence="4">Cell membrane</location>
        <topology evidence="1">Multi-pass membrane protein</topology>
    </subcellularLocation>
</comment>
<comment type="disruption phenotype">
    <text evidence="3">Mice lacking all but one V1ra and V1rb gene (12% of the V1r repertoire) show a lack of chemosensory response to a subset of known pheromonal ligands and changes in maternal aggression as well as male reproductive behavior.</text>
</comment>
<comment type="similarity">
    <text evidence="2">Belongs to the G-protein coupled receptor 1 family.</text>
</comment>